<protein>
    <recommendedName>
        <fullName>COP9 signalosome complex subunit 3</fullName>
        <shortName>SGN3</shortName>
        <shortName>Signalosome subunit 3</shortName>
    </recommendedName>
</protein>
<dbReference type="EMBL" id="CR857080">
    <property type="protein sequence ID" value="CAH89385.1"/>
    <property type="molecule type" value="mRNA"/>
</dbReference>
<dbReference type="RefSeq" id="NP_001124583.1">
    <property type="nucleotide sequence ID" value="NM_001131111.1"/>
</dbReference>
<dbReference type="SMR" id="Q5RFS2"/>
<dbReference type="FunCoup" id="Q5RFS2">
    <property type="interactions" value="4206"/>
</dbReference>
<dbReference type="STRING" id="9601.ENSPPYP00000009030"/>
<dbReference type="Ensembl" id="ENSPPYT00000009396.3">
    <property type="protein sequence ID" value="ENSPPYP00000009030.2"/>
    <property type="gene ID" value="ENSPPYG00000008029.3"/>
</dbReference>
<dbReference type="GeneID" id="100171418"/>
<dbReference type="KEGG" id="pon:100171418"/>
<dbReference type="CTD" id="8533"/>
<dbReference type="eggNOG" id="KOG2582">
    <property type="taxonomic scope" value="Eukaryota"/>
</dbReference>
<dbReference type="GeneTree" id="ENSGT00940000153653"/>
<dbReference type="HOGENOM" id="CLU_028825_0_1_1"/>
<dbReference type="InParanoid" id="Q5RFS2"/>
<dbReference type="OMA" id="NHYHDLV"/>
<dbReference type="OrthoDB" id="29061at2759"/>
<dbReference type="TreeFam" id="TF101146"/>
<dbReference type="Proteomes" id="UP000001595">
    <property type="component" value="Chromosome 17"/>
</dbReference>
<dbReference type="GO" id="GO:0008180">
    <property type="term" value="C:COP9 signalosome"/>
    <property type="evidence" value="ECO:0007669"/>
    <property type="project" value="UniProtKB-KW"/>
</dbReference>
<dbReference type="GO" id="GO:0005829">
    <property type="term" value="C:cytosol"/>
    <property type="evidence" value="ECO:0007669"/>
    <property type="project" value="Ensembl"/>
</dbReference>
<dbReference type="GO" id="GO:0005654">
    <property type="term" value="C:nucleoplasm"/>
    <property type="evidence" value="ECO:0007669"/>
    <property type="project" value="Ensembl"/>
</dbReference>
<dbReference type="GO" id="GO:0048471">
    <property type="term" value="C:perinuclear region of cytoplasm"/>
    <property type="evidence" value="ECO:0007669"/>
    <property type="project" value="Ensembl"/>
</dbReference>
<dbReference type="GO" id="GO:0001701">
    <property type="term" value="P:in utero embryonic development"/>
    <property type="evidence" value="ECO:0007669"/>
    <property type="project" value="Ensembl"/>
</dbReference>
<dbReference type="GO" id="GO:0000338">
    <property type="term" value="P:protein deneddylation"/>
    <property type="evidence" value="ECO:0007669"/>
    <property type="project" value="Ensembl"/>
</dbReference>
<dbReference type="GO" id="GO:0043516">
    <property type="term" value="P:regulation of DNA damage response, signal transduction by p53 class mediator"/>
    <property type="evidence" value="ECO:0007669"/>
    <property type="project" value="Ensembl"/>
</dbReference>
<dbReference type="GO" id="GO:0006511">
    <property type="term" value="P:ubiquitin-dependent protein catabolic process"/>
    <property type="evidence" value="ECO:0007669"/>
    <property type="project" value="TreeGrafter"/>
</dbReference>
<dbReference type="FunFam" id="1.10.10.10:FF:000354">
    <property type="entry name" value="COP9 signalosome complex subunit 3"/>
    <property type="match status" value="1"/>
</dbReference>
<dbReference type="FunFam" id="1.25.40.570:FF:000008">
    <property type="entry name" value="COP9 signalosome complex subunit 3"/>
    <property type="match status" value="1"/>
</dbReference>
<dbReference type="Gene3D" id="1.25.40.570">
    <property type="match status" value="1"/>
</dbReference>
<dbReference type="InterPro" id="IPR055089">
    <property type="entry name" value="COP9_N"/>
</dbReference>
<dbReference type="InterPro" id="IPR050756">
    <property type="entry name" value="CSN3"/>
</dbReference>
<dbReference type="InterPro" id="IPR048621">
    <property type="entry name" value="CSN3_C"/>
</dbReference>
<dbReference type="InterPro" id="IPR000717">
    <property type="entry name" value="PCI_dom"/>
</dbReference>
<dbReference type="InterPro" id="IPR036390">
    <property type="entry name" value="WH_DNA-bd_sf"/>
</dbReference>
<dbReference type="PANTHER" id="PTHR10758">
    <property type="entry name" value="26S PROTEASOME NON-ATPASE REGULATORY SUBUNIT 3/COP9 SIGNALOSOME COMPLEX SUBUNIT 3"/>
    <property type="match status" value="1"/>
</dbReference>
<dbReference type="PANTHER" id="PTHR10758:SF1">
    <property type="entry name" value="COP9 SIGNALOSOME COMPLEX SUBUNIT 3"/>
    <property type="match status" value="1"/>
</dbReference>
<dbReference type="Pfam" id="PF22788">
    <property type="entry name" value="COP9_hel_rpt"/>
    <property type="match status" value="1"/>
</dbReference>
<dbReference type="Pfam" id="PF21215">
    <property type="entry name" value="CSN3-like_C"/>
    <property type="match status" value="1"/>
</dbReference>
<dbReference type="Pfam" id="PF01399">
    <property type="entry name" value="PCI"/>
    <property type="match status" value="1"/>
</dbReference>
<dbReference type="SMART" id="SM00088">
    <property type="entry name" value="PINT"/>
    <property type="match status" value="1"/>
</dbReference>
<dbReference type="SUPFAM" id="SSF46785">
    <property type="entry name" value="Winged helix' DNA-binding domain"/>
    <property type="match status" value="1"/>
</dbReference>
<dbReference type="PROSITE" id="PS50250">
    <property type="entry name" value="PCI"/>
    <property type="match status" value="1"/>
</dbReference>
<feature type="initiator methionine" description="Removed" evidence="2">
    <location>
        <position position="1"/>
    </location>
</feature>
<feature type="chain" id="PRO_0000312646" description="COP9 signalosome complex subunit 3">
    <location>
        <begin position="2"/>
        <end position="423"/>
    </location>
</feature>
<feature type="domain" description="PCI" evidence="3">
    <location>
        <begin position="197"/>
        <end position="365"/>
    </location>
</feature>
<feature type="region of interest" description="Disordered" evidence="4">
    <location>
        <begin position="402"/>
        <end position="423"/>
    </location>
</feature>
<feature type="modified residue" description="N-acetylalanine" evidence="2">
    <location>
        <position position="2"/>
    </location>
</feature>
<feature type="modified residue" description="Phosphoserine" evidence="1">
    <location>
        <position position="407"/>
    </location>
</feature>
<feature type="modified residue" description="Phosphoserine" evidence="2">
    <location>
        <position position="410"/>
    </location>
</feature>
<feature type="modified residue" description="Phosphoserine" evidence="2">
    <location>
        <position position="423"/>
    </location>
</feature>
<organism>
    <name type="scientific">Pongo abelii</name>
    <name type="common">Sumatran orangutan</name>
    <name type="synonym">Pongo pygmaeus abelii</name>
    <dbReference type="NCBI Taxonomy" id="9601"/>
    <lineage>
        <taxon>Eukaryota</taxon>
        <taxon>Metazoa</taxon>
        <taxon>Chordata</taxon>
        <taxon>Craniata</taxon>
        <taxon>Vertebrata</taxon>
        <taxon>Euteleostomi</taxon>
        <taxon>Mammalia</taxon>
        <taxon>Eutheria</taxon>
        <taxon>Euarchontoglires</taxon>
        <taxon>Primates</taxon>
        <taxon>Haplorrhini</taxon>
        <taxon>Catarrhini</taxon>
        <taxon>Hominidae</taxon>
        <taxon>Pongo</taxon>
    </lineage>
</organism>
<proteinExistence type="evidence at transcript level"/>
<evidence type="ECO:0000250" key="1">
    <source>
        <dbReference type="UniProtKB" id="O88543"/>
    </source>
</evidence>
<evidence type="ECO:0000250" key="2">
    <source>
        <dbReference type="UniProtKB" id="Q9UNS2"/>
    </source>
</evidence>
<evidence type="ECO:0000255" key="3">
    <source>
        <dbReference type="PROSITE-ProRule" id="PRU01185"/>
    </source>
</evidence>
<evidence type="ECO:0000256" key="4">
    <source>
        <dbReference type="SAM" id="MobiDB-lite"/>
    </source>
</evidence>
<evidence type="ECO:0000305" key="5"/>
<sequence>MASALEQFVNSVRQLSAQGQMTQLCELINKSGELLAKNLSHLDTVLGALDVQEHSLGVLAVLFVKFSMPSVPDFETLFSQVQLFISTCNGEHIRYATDTFAGLCHQLTNALVERKQPLRGIGILKQAIDKMQMNTNQLTSIHADLCQLCLLAKCFKPALPYLDVDMMDICKENGAYDAKHFLCYYYYGGMIYTGLKNFERALYFYEQAITTPAMAVSHIMLESYKKYILVSLILLGKVQQLPKYTSQIVGRFIKPLSNAYHELAQVYSTNNPSELRNLVNKHSETFTRDNNMGLVKQCLSSLYKKNIQRLTKTFLTLSLQDMASRVQLSGPQEAEKYVLHMIEDGEIFASINQKDGMVSFHDNPEKYNNPAMLHNIDQEMLKCIELDERLKAMDQEITVNPQFVQKSMGSQEDDSGNKPSSYS</sequence>
<keyword id="KW-0007">Acetylation</keyword>
<keyword id="KW-0963">Cytoplasm</keyword>
<keyword id="KW-0539">Nucleus</keyword>
<keyword id="KW-0597">Phosphoprotein</keyword>
<keyword id="KW-1185">Reference proteome</keyword>
<keyword id="KW-0736">Signalosome</keyword>
<accession>Q5RFS2</accession>
<comment type="function">
    <text evidence="1 2">Component of the COP9 signalosome complex (CSN), a complex involved in various cellular and developmental processes (By similarity). The CSN complex is an essential regulator of the ubiquitin (Ubl) conjugation pathway by mediating the deneddylation of the cullin subunits of SCF-type E3 ligase complexes, leading to decrease the Ubl ligase activity of SCF-type complexes such as SCF, CSA or DDB2 (By similarity). The complex is also involved in phosphorylation of p53/TP53, c-jun/JUN, IkappaBalpha/NFKBIA, ITPK1 and IRF8/ICSBP, possibly via its association with CK2 and PKD kinases (By similarity). CSN-dependent phosphorylation of TP53 and JUN promotes and protects degradation by the Ubl system, respectively (By similarity). Essential to maintain the survival of epiblast cells and thus the development of the postimplantation embryo (By similarity).</text>
</comment>
<comment type="subunit">
    <text evidence="2">Component of the CSN complex, composed of COPS1/GPS1, COPS2, COPS3, COPS4, COPS5, COPS6, COPS7 (COPS7A or COPS7B), COPS8 and COPS9 (By similarity). In the complex, it probably interacts directly with COPS1, COPS4, COPS8 and COPS9 (By similarity). Interacts with CK2 and PKD (By similarity). Interacts with the translation initiation factor EIF3S6 and IKBKG (By similarity). Interacts with ERCC6 (By similarity).</text>
</comment>
<comment type="subcellular location">
    <subcellularLocation>
        <location evidence="2">Cytoplasm</location>
    </subcellularLocation>
    <subcellularLocation>
        <location evidence="2">Nucleus</location>
    </subcellularLocation>
</comment>
<comment type="similarity">
    <text evidence="5">Belongs to the CSN3 family.</text>
</comment>
<reference key="1">
    <citation type="submission" date="2004-11" db="EMBL/GenBank/DDBJ databases">
        <authorList>
            <consortium name="The German cDNA consortium"/>
        </authorList>
    </citation>
    <scope>NUCLEOTIDE SEQUENCE [LARGE SCALE MRNA]</scope>
    <source>
        <tissue>Heart</tissue>
    </source>
</reference>
<gene>
    <name type="primary">COPS3</name>
    <name type="synonym">CSN3</name>
</gene>
<name>CSN3_PONAB</name>